<proteinExistence type="evidence at transcript level"/>
<keyword id="KW-0029">Amino-acid transport</keyword>
<keyword id="KW-0150">Chloroplast</keyword>
<keyword id="KW-0472">Membrane</keyword>
<keyword id="KW-0934">Plastid</keyword>
<keyword id="KW-1185">Reference proteome</keyword>
<keyword id="KW-0809">Transit peptide</keyword>
<keyword id="KW-0812">Transmembrane</keyword>
<keyword id="KW-1133">Transmembrane helix</keyword>
<keyword id="KW-0813">Transport</keyword>
<gene>
    <name type="primary">CAT6</name>
    <name type="ordered locus">At5g04770</name>
    <name type="ORF">T1E3.130</name>
</gene>
<dbReference type="EMBL" id="AB008271">
    <property type="protein sequence ID" value="BAB08981.1"/>
    <property type="molecule type" value="Genomic_DNA"/>
</dbReference>
<dbReference type="EMBL" id="AL162972">
    <property type="protein sequence ID" value="CAB86019.1"/>
    <property type="molecule type" value="Genomic_DNA"/>
</dbReference>
<dbReference type="EMBL" id="CP002688">
    <property type="protein sequence ID" value="AED90782.1"/>
    <property type="molecule type" value="Genomic_DNA"/>
</dbReference>
<dbReference type="EMBL" id="AF360186">
    <property type="protein sequence ID" value="AAK25896.1"/>
    <property type="molecule type" value="mRNA"/>
</dbReference>
<dbReference type="EMBL" id="AY040001">
    <property type="protein sequence ID" value="AAK64078.1"/>
    <property type="molecule type" value="mRNA"/>
</dbReference>
<dbReference type="EMBL" id="AY085578">
    <property type="protein sequence ID" value="AAM62800.1"/>
    <property type="molecule type" value="mRNA"/>
</dbReference>
<dbReference type="PIR" id="T48473">
    <property type="entry name" value="T48473"/>
</dbReference>
<dbReference type="RefSeq" id="NP_196097.1">
    <property type="nucleotide sequence ID" value="NM_120559.4"/>
</dbReference>
<dbReference type="SMR" id="Q9LZ20"/>
<dbReference type="BioGRID" id="15634">
    <property type="interactions" value="30"/>
</dbReference>
<dbReference type="FunCoup" id="Q9LZ20">
    <property type="interactions" value="53"/>
</dbReference>
<dbReference type="STRING" id="3702.Q9LZ20"/>
<dbReference type="TCDB" id="2.A.3.3.4">
    <property type="family name" value="the amino acid-polyamine-organocation (apc) family"/>
</dbReference>
<dbReference type="GlyGen" id="Q9LZ20">
    <property type="glycosylation" value="2 sites"/>
</dbReference>
<dbReference type="PaxDb" id="3702-AT5G04770.1"/>
<dbReference type="ProteomicsDB" id="240457"/>
<dbReference type="EnsemblPlants" id="AT5G04770.1">
    <property type="protein sequence ID" value="AT5G04770.1"/>
    <property type="gene ID" value="AT5G04770"/>
</dbReference>
<dbReference type="GeneID" id="830355"/>
<dbReference type="Gramene" id="AT5G04770.1">
    <property type="protein sequence ID" value="AT5G04770.1"/>
    <property type="gene ID" value="AT5G04770"/>
</dbReference>
<dbReference type="KEGG" id="ath:AT5G04770"/>
<dbReference type="Araport" id="AT5G04770"/>
<dbReference type="TAIR" id="AT5G04770">
    <property type="gene designation" value="CAT6"/>
</dbReference>
<dbReference type="eggNOG" id="KOG1286">
    <property type="taxonomic scope" value="Eukaryota"/>
</dbReference>
<dbReference type="HOGENOM" id="CLU_007946_15_9_1"/>
<dbReference type="InParanoid" id="Q9LZ20"/>
<dbReference type="OMA" id="FCLYLMY"/>
<dbReference type="OrthoDB" id="3900342at2759"/>
<dbReference type="PhylomeDB" id="Q9LZ20"/>
<dbReference type="PRO" id="PR:Q9LZ20"/>
<dbReference type="Proteomes" id="UP000006548">
    <property type="component" value="Chromosome 5"/>
</dbReference>
<dbReference type="ExpressionAtlas" id="Q9LZ20">
    <property type="expression patterns" value="baseline and differential"/>
</dbReference>
<dbReference type="GO" id="GO:0031969">
    <property type="term" value="C:chloroplast membrane"/>
    <property type="evidence" value="ECO:0007669"/>
    <property type="project" value="UniProtKB-SubCell"/>
</dbReference>
<dbReference type="GO" id="GO:0005886">
    <property type="term" value="C:plasma membrane"/>
    <property type="evidence" value="ECO:0000314"/>
    <property type="project" value="TAIR"/>
</dbReference>
<dbReference type="GO" id="GO:0015171">
    <property type="term" value="F:amino acid transmembrane transporter activity"/>
    <property type="evidence" value="ECO:0000314"/>
    <property type="project" value="TAIR"/>
</dbReference>
<dbReference type="GO" id="GO:0009624">
    <property type="term" value="P:response to nematode"/>
    <property type="evidence" value="ECO:0000270"/>
    <property type="project" value="TAIR"/>
</dbReference>
<dbReference type="FunFam" id="1.20.1740.10:FF:000099">
    <property type="entry name" value="BnaA03g01440D protein"/>
    <property type="match status" value="1"/>
</dbReference>
<dbReference type="Gene3D" id="1.20.1740.10">
    <property type="entry name" value="Amino acid/polyamine transporter I"/>
    <property type="match status" value="1"/>
</dbReference>
<dbReference type="InterPro" id="IPR002293">
    <property type="entry name" value="AA/rel_permease1"/>
</dbReference>
<dbReference type="InterPro" id="IPR029485">
    <property type="entry name" value="CAT_C"/>
</dbReference>
<dbReference type="PANTHER" id="PTHR43243:SF69">
    <property type="entry name" value="CATIONIC AMINO ACID TRANSPORTER 6, CHLOROPLASTIC"/>
    <property type="match status" value="1"/>
</dbReference>
<dbReference type="PANTHER" id="PTHR43243">
    <property type="entry name" value="INNER MEMBRANE TRANSPORTER YGJI-RELATED"/>
    <property type="match status" value="1"/>
</dbReference>
<dbReference type="Pfam" id="PF13520">
    <property type="entry name" value="AA_permease_2"/>
    <property type="match status" value="1"/>
</dbReference>
<dbReference type="Pfam" id="PF13906">
    <property type="entry name" value="AA_permease_C"/>
    <property type="match status" value="1"/>
</dbReference>
<accession>Q9LZ20</accession>
<name>CAAT6_ARATH</name>
<protein>
    <recommendedName>
        <fullName>Cationic amino acid transporter 6, chloroplastic</fullName>
    </recommendedName>
</protein>
<evidence type="ECO:0000255" key="1"/>
<evidence type="ECO:0000269" key="2">
    <source>
    </source>
</evidence>
<evidence type="ECO:0000305" key="3"/>
<feature type="transit peptide" description="Chloroplast" evidence="1">
    <location>
        <begin position="1"/>
        <end position="50"/>
    </location>
</feature>
<feature type="chain" id="PRO_0000415782" description="Cationic amino acid transporter 6, chloroplastic">
    <location>
        <begin position="51"/>
        <end position="583"/>
    </location>
</feature>
<feature type="transmembrane region" description="Helical" evidence="1">
    <location>
        <begin position="63"/>
        <end position="83"/>
    </location>
</feature>
<feature type="transmembrane region" description="Helical" evidence="1">
    <location>
        <begin position="91"/>
        <end position="111"/>
    </location>
</feature>
<feature type="transmembrane region" description="Helical" evidence="1">
    <location>
        <begin position="132"/>
        <end position="152"/>
    </location>
</feature>
<feature type="transmembrane region" description="Helical" evidence="1">
    <location>
        <begin position="186"/>
        <end position="206"/>
    </location>
</feature>
<feature type="transmembrane region" description="Helical" evidence="1">
    <location>
        <begin position="216"/>
        <end position="236"/>
    </location>
</feature>
<feature type="transmembrane region" description="Helical" evidence="1">
    <location>
        <begin position="255"/>
        <end position="275"/>
    </location>
</feature>
<feature type="transmembrane region" description="Helical" evidence="1">
    <location>
        <begin position="294"/>
        <end position="314"/>
    </location>
</feature>
<feature type="transmembrane region" description="Helical" evidence="1">
    <location>
        <begin position="347"/>
        <end position="367"/>
    </location>
</feature>
<feature type="transmembrane region" description="Helical" evidence="1">
    <location>
        <begin position="397"/>
        <end position="417"/>
    </location>
</feature>
<feature type="transmembrane region" description="Helical" evidence="1">
    <location>
        <begin position="418"/>
        <end position="438"/>
    </location>
</feature>
<feature type="transmembrane region" description="Helical" evidence="1">
    <location>
        <begin position="450"/>
        <end position="470"/>
    </location>
</feature>
<feature type="transmembrane region" description="Helical" evidence="1">
    <location>
        <begin position="481"/>
        <end position="501"/>
    </location>
</feature>
<feature type="transmembrane region" description="Helical" evidence="1">
    <location>
        <begin position="509"/>
        <end position="529"/>
    </location>
</feature>
<feature type="transmembrane region" description="Helical" evidence="1">
    <location>
        <begin position="541"/>
        <end position="561"/>
    </location>
</feature>
<sequence>MEVQSSSNNGGHSSFSSLRVYLNSLSATPSRLSRRAISVSTSSDEMSRVRAVSGEQMRRTLRWYDLIGLGIGGMVGAGVFVTTGRASRLDAGPSIVVSYAIAGLCALLSAFCYTEFAVHLPVAGGAFSYIRITFGEFPAFFTGANLVMDYVMSNAAVSRSFTAYLGTAFGISTSKWRFVVSGLPKGFNEIDPVAVLVVLVITVIICCSTRESSKVNMIMTAFHIAFIFFVIVMGFIKGDSKNLSSPANPEHPSGFFPFGAAGVFNGAAMVYLSYIGYDAVSTMAEEVENPVKDIPVGVSGSVAIVTVLYCLMAVSMSMLLPYDLIDPEAPFSAAFRGSNGWEWVTKVVGIGASFGILTSLLVAMLGQARYMCVIGRSRVVPFWFAKIHPKTSTPVNASTFLGIFTAALALFTDLNVLLNLVSIGTLFVFYMVANALIFRRYVPVGPTKPWPTLCFLTLFSITSLVFTLIWKLVPEGKPKAFMLGASAVVAIAIVLSFQCVVPQARKPELWGVPFMPWTPCVSIFLNIFLLGSLDAPSYVRFGFFSGLIVLVYLFYGVHASSDAEANGSFGVKDGQVMKELIEV</sequence>
<comment type="function">
    <text evidence="2">Permease involved in the transport of the cationic neutral or acidic amino acids.</text>
</comment>
<comment type="subcellular location">
    <subcellularLocation>
        <location evidence="3">Plastid</location>
        <location evidence="3">Chloroplast membrane</location>
        <topology evidence="3">Multi-pass membrane protein</topology>
    </subcellularLocation>
</comment>
<comment type="tissue specificity">
    <text evidence="2">Expressed in roots, stems, flowers, and leaves.</text>
</comment>
<comment type="similarity">
    <text evidence="3">Belongs to the amino acid-polyamine-organocation (APC) superfamily. Cationic amino acid transporter (CAT) (TC 2.A.3.3) family.</text>
</comment>
<reference key="1">
    <citation type="journal article" date="1997" name="DNA Res.">
        <title>Structural analysis of Arabidopsis thaliana chromosome 5. III. Sequence features of the regions of 1,191,918 bp covered by seventeen physically assigned P1 clones.</title>
        <authorList>
            <person name="Nakamura Y."/>
            <person name="Sato S."/>
            <person name="Kaneko T."/>
            <person name="Kotani H."/>
            <person name="Asamizu E."/>
            <person name="Miyajima N."/>
            <person name="Tabata S."/>
        </authorList>
    </citation>
    <scope>NUCLEOTIDE SEQUENCE [LARGE SCALE GENOMIC DNA]</scope>
    <source>
        <strain>cv. Columbia</strain>
    </source>
</reference>
<reference key="2">
    <citation type="journal article" date="2000" name="Nature">
        <title>Sequence and analysis of chromosome 5 of the plant Arabidopsis thaliana.</title>
        <authorList>
            <person name="Tabata S."/>
            <person name="Kaneko T."/>
            <person name="Nakamura Y."/>
            <person name="Kotani H."/>
            <person name="Kato T."/>
            <person name="Asamizu E."/>
            <person name="Miyajima N."/>
            <person name="Sasamoto S."/>
            <person name="Kimura T."/>
            <person name="Hosouchi T."/>
            <person name="Kawashima K."/>
            <person name="Kohara M."/>
            <person name="Matsumoto M."/>
            <person name="Matsuno A."/>
            <person name="Muraki A."/>
            <person name="Nakayama S."/>
            <person name="Nakazaki N."/>
            <person name="Naruo K."/>
            <person name="Okumura S."/>
            <person name="Shinpo S."/>
            <person name="Takeuchi C."/>
            <person name="Wada T."/>
            <person name="Watanabe A."/>
            <person name="Yamada M."/>
            <person name="Yasuda M."/>
            <person name="Sato S."/>
            <person name="de la Bastide M."/>
            <person name="Huang E."/>
            <person name="Spiegel L."/>
            <person name="Gnoj L."/>
            <person name="O'Shaughnessy A."/>
            <person name="Preston R."/>
            <person name="Habermann K."/>
            <person name="Murray J."/>
            <person name="Johnson D."/>
            <person name="Rohlfing T."/>
            <person name="Nelson J."/>
            <person name="Stoneking T."/>
            <person name="Pepin K."/>
            <person name="Spieth J."/>
            <person name="Sekhon M."/>
            <person name="Armstrong J."/>
            <person name="Becker M."/>
            <person name="Belter E."/>
            <person name="Cordum H."/>
            <person name="Cordes M."/>
            <person name="Courtney L."/>
            <person name="Courtney W."/>
            <person name="Dante M."/>
            <person name="Du H."/>
            <person name="Edwards J."/>
            <person name="Fryman J."/>
            <person name="Haakensen B."/>
            <person name="Lamar E."/>
            <person name="Latreille P."/>
            <person name="Leonard S."/>
            <person name="Meyer R."/>
            <person name="Mulvaney E."/>
            <person name="Ozersky P."/>
            <person name="Riley A."/>
            <person name="Strowmatt C."/>
            <person name="Wagner-McPherson C."/>
            <person name="Wollam A."/>
            <person name="Yoakum M."/>
            <person name="Bell M."/>
            <person name="Dedhia N."/>
            <person name="Parnell L."/>
            <person name="Shah R."/>
            <person name="Rodriguez M."/>
            <person name="Hoon See L."/>
            <person name="Vil D."/>
            <person name="Baker J."/>
            <person name="Kirchoff K."/>
            <person name="Toth K."/>
            <person name="King L."/>
            <person name="Bahret A."/>
            <person name="Miller B."/>
            <person name="Marra M.A."/>
            <person name="Martienssen R."/>
            <person name="McCombie W.R."/>
            <person name="Wilson R.K."/>
            <person name="Murphy G."/>
            <person name="Bancroft I."/>
            <person name="Volckaert G."/>
            <person name="Wambutt R."/>
            <person name="Duesterhoeft A."/>
            <person name="Stiekema W."/>
            <person name="Pohl T."/>
            <person name="Entian K.-D."/>
            <person name="Terryn N."/>
            <person name="Hartley N."/>
            <person name="Bent E."/>
            <person name="Johnson S."/>
            <person name="Langham S.-A."/>
            <person name="McCullagh B."/>
            <person name="Robben J."/>
            <person name="Grymonprez B."/>
            <person name="Zimmermann W."/>
            <person name="Ramsperger U."/>
            <person name="Wedler H."/>
            <person name="Balke K."/>
            <person name="Wedler E."/>
            <person name="Peters S."/>
            <person name="van Staveren M."/>
            <person name="Dirkse W."/>
            <person name="Mooijman P."/>
            <person name="Klein Lankhorst R."/>
            <person name="Weitzenegger T."/>
            <person name="Bothe G."/>
            <person name="Rose M."/>
            <person name="Hauf J."/>
            <person name="Berneiser S."/>
            <person name="Hempel S."/>
            <person name="Feldpausch M."/>
            <person name="Lamberth S."/>
            <person name="Villarroel R."/>
            <person name="Gielen J."/>
            <person name="Ardiles W."/>
            <person name="Bents O."/>
            <person name="Lemcke K."/>
            <person name="Kolesov G."/>
            <person name="Mayer K.F.X."/>
            <person name="Rudd S."/>
            <person name="Schoof H."/>
            <person name="Schueller C."/>
            <person name="Zaccaria P."/>
            <person name="Mewes H.-W."/>
            <person name="Bevan M."/>
            <person name="Fransz P.F."/>
        </authorList>
    </citation>
    <scope>NUCLEOTIDE SEQUENCE [LARGE SCALE GENOMIC DNA]</scope>
    <source>
        <strain>cv. Columbia</strain>
    </source>
</reference>
<reference key="3">
    <citation type="journal article" date="2017" name="Plant J.">
        <title>Araport11: a complete reannotation of the Arabidopsis thaliana reference genome.</title>
        <authorList>
            <person name="Cheng C.Y."/>
            <person name="Krishnakumar V."/>
            <person name="Chan A.P."/>
            <person name="Thibaud-Nissen F."/>
            <person name="Schobel S."/>
            <person name="Town C.D."/>
        </authorList>
    </citation>
    <scope>GENOME REANNOTATION</scope>
    <source>
        <strain>cv. Columbia</strain>
    </source>
</reference>
<reference key="4">
    <citation type="journal article" date="2003" name="Science">
        <title>Empirical analysis of transcriptional activity in the Arabidopsis genome.</title>
        <authorList>
            <person name="Yamada K."/>
            <person name="Lim J."/>
            <person name="Dale J.M."/>
            <person name="Chen H."/>
            <person name="Shinn P."/>
            <person name="Palm C.J."/>
            <person name="Southwick A.M."/>
            <person name="Wu H.C."/>
            <person name="Kim C.J."/>
            <person name="Nguyen M."/>
            <person name="Pham P.K."/>
            <person name="Cheuk R.F."/>
            <person name="Karlin-Newmann G."/>
            <person name="Liu S.X."/>
            <person name="Lam B."/>
            <person name="Sakano H."/>
            <person name="Wu T."/>
            <person name="Yu G."/>
            <person name="Miranda M."/>
            <person name="Quach H.L."/>
            <person name="Tripp M."/>
            <person name="Chang C.H."/>
            <person name="Lee J.M."/>
            <person name="Toriumi M.J."/>
            <person name="Chan M.M."/>
            <person name="Tang C.C."/>
            <person name="Onodera C.S."/>
            <person name="Deng J.M."/>
            <person name="Akiyama K."/>
            <person name="Ansari Y."/>
            <person name="Arakawa T."/>
            <person name="Banh J."/>
            <person name="Banno F."/>
            <person name="Bowser L."/>
            <person name="Brooks S.Y."/>
            <person name="Carninci P."/>
            <person name="Chao Q."/>
            <person name="Choy N."/>
            <person name="Enju A."/>
            <person name="Goldsmith A.D."/>
            <person name="Gurjal M."/>
            <person name="Hansen N.F."/>
            <person name="Hayashizaki Y."/>
            <person name="Johnson-Hopson C."/>
            <person name="Hsuan V.W."/>
            <person name="Iida K."/>
            <person name="Karnes M."/>
            <person name="Khan S."/>
            <person name="Koesema E."/>
            <person name="Ishida J."/>
            <person name="Jiang P.X."/>
            <person name="Jones T."/>
            <person name="Kawai J."/>
            <person name="Kamiya A."/>
            <person name="Meyers C."/>
            <person name="Nakajima M."/>
            <person name="Narusaka M."/>
            <person name="Seki M."/>
            <person name="Sakurai T."/>
            <person name="Satou M."/>
            <person name="Tamse R."/>
            <person name="Vaysberg M."/>
            <person name="Wallender E.K."/>
            <person name="Wong C."/>
            <person name="Yamamura Y."/>
            <person name="Yuan S."/>
            <person name="Shinozaki K."/>
            <person name="Davis R.W."/>
            <person name="Theologis A."/>
            <person name="Ecker J.R."/>
        </authorList>
    </citation>
    <scope>NUCLEOTIDE SEQUENCE [LARGE SCALE MRNA]</scope>
    <source>
        <strain>cv. Columbia</strain>
    </source>
</reference>
<reference key="5">
    <citation type="submission" date="2002-03" db="EMBL/GenBank/DDBJ databases">
        <title>Full-length cDNA from Arabidopsis thaliana.</title>
        <authorList>
            <person name="Brover V.V."/>
            <person name="Troukhan M.E."/>
            <person name="Alexandrov N.A."/>
            <person name="Lu Y.-P."/>
            <person name="Flavell R.B."/>
            <person name="Feldmann K.A."/>
        </authorList>
    </citation>
    <scope>NUCLEOTIDE SEQUENCE [LARGE SCALE MRNA]</scope>
</reference>
<reference key="6">
    <citation type="journal article" date="2004" name="Plant Physiol.">
        <title>Molecular and functional characterization of a family of amino acid transporters from Arabidopsis.</title>
        <authorList>
            <person name="Su Y.-H."/>
            <person name="Frommer W.B."/>
            <person name="Ludewig U."/>
        </authorList>
    </citation>
    <scope>FUNCTION</scope>
    <scope>TISSUE SPECIFICITY</scope>
    <scope>GENE FAMILY</scope>
    <scope>NOMENCLATURE</scope>
    <source>
        <strain>cv. Columbia</strain>
    </source>
</reference>
<organism>
    <name type="scientific">Arabidopsis thaliana</name>
    <name type="common">Mouse-ear cress</name>
    <dbReference type="NCBI Taxonomy" id="3702"/>
    <lineage>
        <taxon>Eukaryota</taxon>
        <taxon>Viridiplantae</taxon>
        <taxon>Streptophyta</taxon>
        <taxon>Embryophyta</taxon>
        <taxon>Tracheophyta</taxon>
        <taxon>Spermatophyta</taxon>
        <taxon>Magnoliopsida</taxon>
        <taxon>eudicotyledons</taxon>
        <taxon>Gunneridae</taxon>
        <taxon>Pentapetalae</taxon>
        <taxon>rosids</taxon>
        <taxon>malvids</taxon>
        <taxon>Brassicales</taxon>
        <taxon>Brassicaceae</taxon>
        <taxon>Camelineae</taxon>
        <taxon>Arabidopsis</taxon>
    </lineage>
</organism>